<protein>
    <recommendedName>
        <fullName>Nitrite reductase (NADH) small subunit</fullName>
        <ecNumber>1.7.1.15</ecNumber>
    </recommendedName>
</protein>
<evidence type="ECO:0000269" key="1">
    <source>
    </source>
</evidence>
<evidence type="ECO:0000305" key="2"/>
<evidence type="ECO:0007829" key="3">
    <source>
        <dbReference type="PDB" id="2JO6"/>
    </source>
</evidence>
<proteinExistence type="evidence at protein level"/>
<organism>
    <name type="scientific">Escherichia coli (strain K12)</name>
    <dbReference type="NCBI Taxonomy" id="83333"/>
    <lineage>
        <taxon>Bacteria</taxon>
        <taxon>Pseudomonadati</taxon>
        <taxon>Pseudomonadota</taxon>
        <taxon>Gammaproteobacteria</taxon>
        <taxon>Enterobacterales</taxon>
        <taxon>Enterobacteriaceae</taxon>
        <taxon>Escherichia</taxon>
    </lineage>
</organism>
<sequence length="108" mass="12284">MSQWKDICKIDDILPETGVCALLGDEQVAIFRPYHSDQVFAISNIDPFFESSVLSRGLIAEHQGELWVASPLKKQRFRLSDGLCMEDEQFSVKHYEARVKDGVVQLRG</sequence>
<accession>P0A9I8</accession>
<accession>P23675</accession>
<accession>Q2M732</accession>
<comment type="function">
    <text evidence="1">Required for activity of the reductase.</text>
</comment>
<comment type="catalytic activity">
    <reaction>
        <text>NH4(+) + 3 NAD(+) + 2 H2O = nitrite + 3 NADH + 5 H(+)</text>
        <dbReference type="Rhea" id="RHEA:24628"/>
        <dbReference type="ChEBI" id="CHEBI:15377"/>
        <dbReference type="ChEBI" id="CHEBI:15378"/>
        <dbReference type="ChEBI" id="CHEBI:16301"/>
        <dbReference type="ChEBI" id="CHEBI:28938"/>
        <dbReference type="ChEBI" id="CHEBI:57540"/>
        <dbReference type="ChEBI" id="CHEBI:57945"/>
        <dbReference type="EC" id="1.7.1.15"/>
    </reaction>
</comment>
<comment type="subunit">
    <text>Associates with NirB.</text>
</comment>
<comment type="subcellular location">
    <subcellularLocation>
        <location>Cytoplasm</location>
    </subcellularLocation>
</comment>
<comment type="similarity">
    <text evidence="2">To B.subtilis NasE.</text>
</comment>
<name>NIRD_ECOLI</name>
<keyword id="KW-0002">3D-structure</keyword>
<keyword id="KW-0963">Cytoplasm</keyword>
<keyword id="KW-0520">NAD</keyword>
<keyword id="KW-0534">Nitrate assimilation</keyword>
<keyword id="KW-0560">Oxidoreductase</keyword>
<keyword id="KW-1185">Reference proteome</keyword>
<gene>
    <name type="primary">nirD</name>
    <name type="ordered locus">b3366</name>
    <name type="ordered locus">JW3329</name>
</gene>
<dbReference type="EC" id="1.7.1.15"/>
<dbReference type="EMBL" id="X14202">
    <property type="protein sequence ID" value="CAA32417.1"/>
    <property type="status" value="ALT_SEQ"/>
    <property type="molecule type" value="Genomic_DNA"/>
</dbReference>
<dbReference type="EMBL" id="U18997">
    <property type="protein sequence ID" value="AAA58163.1"/>
    <property type="molecule type" value="Genomic_DNA"/>
</dbReference>
<dbReference type="EMBL" id="U00096">
    <property type="protein sequence ID" value="AAC76391.1"/>
    <property type="molecule type" value="Genomic_DNA"/>
</dbReference>
<dbReference type="EMBL" id="AP009048">
    <property type="protein sequence ID" value="BAE77924.1"/>
    <property type="molecule type" value="Genomic_DNA"/>
</dbReference>
<dbReference type="PIR" id="A65131">
    <property type="entry name" value="A65131"/>
</dbReference>
<dbReference type="RefSeq" id="NP_417825.1">
    <property type="nucleotide sequence ID" value="NC_000913.3"/>
</dbReference>
<dbReference type="RefSeq" id="WP_000084764.1">
    <property type="nucleotide sequence ID" value="NZ_STEB01000004.1"/>
</dbReference>
<dbReference type="PDB" id="2JO6">
    <property type="method" value="NMR"/>
    <property type="chains" value="A=1-108"/>
</dbReference>
<dbReference type="PDBsum" id="2JO6"/>
<dbReference type="SMR" id="P0A9I8"/>
<dbReference type="BioGRID" id="4262476">
    <property type="interactions" value="15"/>
</dbReference>
<dbReference type="FunCoup" id="P0A9I8">
    <property type="interactions" value="79"/>
</dbReference>
<dbReference type="STRING" id="511145.b3366"/>
<dbReference type="jPOST" id="P0A9I8"/>
<dbReference type="PaxDb" id="511145-b3366"/>
<dbReference type="DNASU" id="947881"/>
<dbReference type="EnsemblBacteria" id="AAC76391">
    <property type="protein sequence ID" value="AAC76391"/>
    <property type="gene ID" value="b3366"/>
</dbReference>
<dbReference type="GeneID" id="93778631"/>
<dbReference type="GeneID" id="947881"/>
<dbReference type="KEGG" id="ecj:JW3329"/>
<dbReference type="KEGG" id="eco:b3366"/>
<dbReference type="KEGG" id="ecoc:C3026_18280"/>
<dbReference type="PATRIC" id="fig|1411691.4.peg.3363"/>
<dbReference type="EchoBASE" id="EB0649"/>
<dbReference type="eggNOG" id="COG2146">
    <property type="taxonomic scope" value="Bacteria"/>
</dbReference>
<dbReference type="HOGENOM" id="CLU_055690_3_0_6"/>
<dbReference type="InParanoid" id="P0A9I8"/>
<dbReference type="OMA" id="IDNRDPF"/>
<dbReference type="OrthoDB" id="516687at2"/>
<dbReference type="PhylomeDB" id="P0A9I8"/>
<dbReference type="BioCyc" id="EcoCyc:NIRD-MONOMER"/>
<dbReference type="BioCyc" id="MetaCyc:NIRD-MONOMER"/>
<dbReference type="BRENDA" id="1.7.1.15">
    <property type="organism ID" value="2026"/>
</dbReference>
<dbReference type="EvolutionaryTrace" id="P0A9I8"/>
<dbReference type="PRO" id="PR:P0A9I8"/>
<dbReference type="Proteomes" id="UP000000625">
    <property type="component" value="Chromosome"/>
</dbReference>
<dbReference type="GO" id="GO:0005737">
    <property type="term" value="C:cytoplasm"/>
    <property type="evidence" value="ECO:0007669"/>
    <property type="project" value="UniProtKB-SubCell"/>
</dbReference>
<dbReference type="GO" id="GO:0009344">
    <property type="term" value="C:nitrite reductase complex [NAD(P)H]"/>
    <property type="evidence" value="ECO:0000314"/>
    <property type="project" value="EcoCyc"/>
</dbReference>
<dbReference type="GO" id="GO:0051537">
    <property type="term" value="F:2 iron, 2 sulfur cluster binding"/>
    <property type="evidence" value="ECO:0007669"/>
    <property type="project" value="InterPro"/>
</dbReference>
<dbReference type="GO" id="GO:0106316">
    <property type="term" value="F:nitrite reductase NADH activity"/>
    <property type="evidence" value="ECO:0007669"/>
    <property type="project" value="UniProtKB-EC"/>
</dbReference>
<dbReference type="GO" id="GO:0042128">
    <property type="term" value="P:nitrate assimilation"/>
    <property type="evidence" value="ECO:0007669"/>
    <property type="project" value="UniProtKB-KW"/>
</dbReference>
<dbReference type="CDD" id="cd03529">
    <property type="entry name" value="Rieske_NirD"/>
    <property type="match status" value="1"/>
</dbReference>
<dbReference type="FunFam" id="2.102.10.10:FF:000002">
    <property type="entry name" value="Nitrite reductase [NAD(P)H] small subunit"/>
    <property type="match status" value="1"/>
</dbReference>
<dbReference type="Gene3D" id="2.102.10.10">
    <property type="entry name" value="Rieske [2Fe-2S] iron-sulphur domain"/>
    <property type="match status" value="1"/>
</dbReference>
<dbReference type="InterPro" id="IPR017881">
    <property type="entry name" value="NirD"/>
</dbReference>
<dbReference type="InterPro" id="IPR012748">
    <property type="entry name" value="Rieske-like_NirD"/>
</dbReference>
<dbReference type="InterPro" id="IPR036922">
    <property type="entry name" value="Rieske_2Fe-2S_sf"/>
</dbReference>
<dbReference type="NCBIfam" id="TIGR02378">
    <property type="entry name" value="nirD_assim_sml"/>
    <property type="match status" value="1"/>
</dbReference>
<dbReference type="NCBIfam" id="NF007066">
    <property type="entry name" value="PRK09511.1"/>
    <property type="match status" value="1"/>
</dbReference>
<dbReference type="PANTHER" id="PTHR40562">
    <property type="match status" value="1"/>
</dbReference>
<dbReference type="PANTHER" id="PTHR40562:SF1">
    <property type="entry name" value="NITRITE REDUCTASE (NADH) SMALL SUBUNIT"/>
    <property type="match status" value="1"/>
</dbReference>
<dbReference type="Pfam" id="PF13806">
    <property type="entry name" value="Rieske_2"/>
    <property type="match status" value="1"/>
</dbReference>
<dbReference type="SUPFAM" id="SSF50022">
    <property type="entry name" value="ISP domain"/>
    <property type="match status" value="1"/>
</dbReference>
<dbReference type="PROSITE" id="PS51300">
    <property type="entry name" value="NIRD"/>
    <property type="match status" value="1"/>
</dbReference>
<reference key="1">
    <citation type="journal article" date="1989" name="Nucleic Acids Res.">
        <title>Cloning of binding sequences for the Escherichia coli transcription activators, FNR and CRP: location of bases involved in discrimination between FNR and CRP.</title>
        <authorList>
            <person name="Bell A.I."/>
            <person name="Gaston K.L."/>
            <person name="Cole J.A."/>
            <person name="Busby S.J.W."/>
        </authorList>
    </citation>
    <scope>NUCLEOTIDE SEQUENCE [GENOMIC DNA]</scope>
    <source>
        <strain>K12</strain>
    </source>
</reference>
<reference key="2">
    <citation type="journal article" date="1990" name="Eur. J. Biochem.">
        <title>Nucleotide sequence, organisation and structural analysis of the products of genes in the nirB-cysG region of the Escherichia coli K-12 chromosome.</title>
        <authorList>
            <person name="Peakman T."/>
            <person name="Crouzet J."/>
            <person name="Mayaux J.F."/>
            <person name="Busby S.J.W."/>
            <person name="Mohan S."/>
            <person name="Harborne N."/>
            <person name="Wootton J."/>
            <person name="Nicolson R."/>
            <person name="Cole J.A."/>
        </authorList>
    </citation>
    <scope>NUCLEOTIDE SEQUENCE [GENOMIC DNA]</scope>
    <source>
        <strain>K12</strain>
    </source>
</reference>
<reference key="3">
    <citation type="journal article" date="1997" name="Science">
        <title>The complete genome sequence of Escherichia coli K-12.</title>
        <authorList>
            <person name="Blattner F.R."/>
            <person name="Plunkett G. III"/>
            <person name="Bloch C.A."/>
            <person name="Perna N.T."/>
            <person name="Burland V."/>
            <person name="Riley M."/>
            <person name="Collado-Vides J."/>
            <person name="Glasner J.D."/>
            <person name="Rode C.K."/>
            <person name="Mayhew G.F."/>
            <person name="Gregor J."/>
            <person name="Davis N.W."/>
            <person name="Kirkpatrick H.A."/>
            <person name="Goeden M.A."/>
            <person name="Rose D.J."/>
            <person name="Mau B."/>
            <person name="Shao Y."/>
        </authorList>
    </citation>
    <scope>NUCLEOTIDE SEQUENCE [LARGE SCALE GENOMIC DNA]</scope>
    <source>
        <strain>K12 / MG1655 / ATCC 47076</strain>
    </source>
</reference>
<reference key="4">
    <citation type="journal article" date="2006" name="Mol. Syst. Biol.">
        <title>Highly accurate genome sequences of Escherichia coli K-12 strains MG1655 and W3110.</title>
        <authorList>
            <person name="Hayashi K."/>
            <person name="Morooka N."/>
            <person name="Yamamoto Y."/>
            <person name="Fujita K."/>
            <person name="Isono K."/>
            <person name="Choi S."/>
            <person name="Ohtsubo E."/>
            <person name="Baba T."/>
            <person name="Wanner B.L."/>
            <person name="Mori H."/>
            <person name="Horiuchi T."/>
        </authorList>
    </citation>
    <scope>NUCLEOTIDE SEQUENCE [LARGE SCALE GENOMIC DNA]</scope>
    <source>
        <strain>K12 / W3110 / ATCC 27325 / DSM 5911</strain>
    </source>
</reference>
<reference key="5">
    <citation type="journal article" date="1992" name="Mol. Microbiol.">
        <title>Transcriptional control, translation and function of the products of the five open reading frames of the Escherichia coli nir operon.</title>
        <authorList>
            <person name="Harborne N."/>
            <person name="Griffiths L."/>
            <person name="Busby S.J."/>
            <person name="Cole J.A."/>
        </authorList>
    </citation>
    <scope>FUNCTION</scope>
</reference>
<feature type="chain" id="PRO_0000096855" description="Nitrite reductase (NADH) small subunit">
    <location>
        <begin position="1"/>
        <end position="108"/>
    </location>
</feature>
<feature type="sequence conflict" description="In Ref. 1 and 2." evidence="2" ref="1 2">
    <original>G</original>
    <variation>D</variation>
    <location>
        <position position="102"/>
    </location>
</feature>
<feature type="strand" evidence="3">
    <location>
        <begin position="5"/>
        <end position="9"/>
    </location>
</feature>
<feature type="turn" evidence="3">
    <location>
        <begin position="10"/>
        <end position="12"/>
    </location>
</feature>
<feature type="strand" evidence="3">
    <location>
        <begin position="17"/>
        <end position="23"/>
    </location>
</feature>
<feature type="strand" evidence="3">
    <location>
        <begin position="26"/>
        <end position="32"/>
    </location>
</feature>
<feature type="strand" evidence="3">
    <location>
        <begin position="34"/>
        <end position="37"/>
    </location>
</feature>
<feature type="strand" evidence="3">
    <location>
        <begin position="40"/>
        <end position="45"/>
    </location>
</feature>
<feature type="strand" evidence="3">
    <location>
        <begin position="47"/>
        <end position="49"/>
    </location>
</feature>
<feature type="strand" evidence="3">
    <location>
        <begin position="57"/>
        <end position="62"/>
    </location>
</feature>
<feature type="strand" evidence="3">
    <location>
        <begin position="65"/>
        <end position="70"/>
    </location>
</feature>
<feature type="turn" evidence="3">
    <location>
        <begin position="71"/>
        <end position="74"/>
    </location>
</feature>
<feature type="strand" evidence="3">
    <location>
        <begin position="75"/>
        <end position="78"/>
    </location>
</feature>
<feature type="turn" evidence="3">
    <location>
        <begin position="79"/>
        <end position="82"/>
    </location>
</feature>
<feature type="turn" evidence="3">
    <location>
        <begin position="85"/>
        <end position="90"/>
    </location>
</feature>
<feature type="strand" evidence="3">
    <location>
        <begin position="94"/>
        <end position="100"/>
    </location>
</feature>
<feature type="strand" evidence="3">
    <location>
        <begin position="103"/>
        <end position="107"/>
    </location>
</feature>